<keyword id="KW-0012">Acyltransferase</keyword>
<keyword id="KW-0275">Fatty acid biosynthesis</keyword>
<keyword id="KW-0276">Fatty acid metabolism</keyword>
<keyword id="KW-0444">Lipid biosynthesis</keyword>
<keyword id="KW-0443">Lipid metabolism</keyword>
<keyword id="KW-0511">Multifunctional enzyme</keyword>
<keyword id="KW-0521">NADP</keyword>
<keyword id="KW-0596">Phosphopantetheine</keyword>
<keyword id="KW-0597">Phosphoprotein</keyword>
<keyword id="KW-1185">Reference proteome</keyword>
<keyword id="KW-0808">Transferase</keyword>
<proteinExistence type="inferred from homology"/>
<organism>
    <name type="scientific">Mycobacterium bovis (strain ATCC BAA-935 / AF2122/97)</name>
    <dbReference type="NCBI Taxonomy" id="233413"/>
    <lineage>
        <taxon>Bacteria</taxon>
        <taxon>Bacillati</taxon>
        <taxon>Actinomycetota</taxon>
        <taxon>Actinomycetes</taxon>
        <taxon>Mycobacteriales</taxon>
        <taxon>Mycobacteriaceae</taxon>
        <taxon>Mycobacterium</taxon>
        <taxon>Mycobacterium tuberculosis complex</taxon>
    </lineage>
</organism>
<dbReference type="EC" id="2.3.1.287" evidence="3"/>
<dbReference type="EMBL" id="LT708304">
    <property type="protein sequence ID" value="SIU02484.1"/>
    <property type="molecule type" value="Genomic_DNA"/>
</dbReference>
<dbReference type="RefSeq" id="NP_857492.1">
    <property type="nucleotide sequence ID" value="NC_002945.3"/>
</dbReference>
<dbReference type="RefSeq" id="WP_003900763.1">
    <property type="nucleotide sequence ID" value="NC_002945.4"/>
</dbReference>
<dbReference type="SMR" id="Q7TVK8"/>
<dbReference type="KEGG" id="mbo:BQ2027_MB3855C"/>
<dbReference type="PATRIC" id="fig|233413.5.peg.4216"/>
<dbReference type="UniPathway" id="UPA00094"/>
<dbReference type="UniPathway" id="UPA01063"/>
<dbReference type="Proteomes" id="UP000001419">
    <property type="component" value="Chromosome"/>
</dbReference>
<dbReference type="GO" id="GO:0005737">
    <property type="term" value="C:cytoplasm"/>
    <property type="evidence" value="ECO:0007669"/>
    <property type="project" value="TreeGrafter"/>
</dbReference>
<dbReference type="GO" id="GO:0005886">
    <property type="term" value="C:plasma membrane"/>
    <property type="evidence" value="ECO:0007669"/>
    <property type="project" value="TreeGrafter"/>
</dbReference>
<dbReference type="GO" id="GO:0004315">
    <property type="term" value="F:3-oxoacyl-[acyl-carrier-protein] synthase activity"/>
    <property type="evidence" value="ECO:0007669"/>
    <property type="project" value="InterPro"/>
</dbReference>
<dbReference type="GO" id="GO:0004312">
    <property type="term" value="F:fatty acid synthase activity"/>
    <property type="evidence" value="ECO:0007669"/>
    <property type="project" value="TreeGrafter"/>
</dbReference>
<dbReference type="GO" id="GO:0016491">
    <property type="term" value="F:oxidoreductase activity"/>
    <property type="evidence" value="ECO:0007669"/>
    <property type="project" value="InterPro"/>
</dbReference>
<dbReference type="GO" id="GO:0031177">
    <property type="term" value="F:phosphopantetheine binding"/>
    <property type="evidence" value="ECO:0007669"/>
    <property type="project" value="InterPro"/>
</dbReference>
<dbReference type="GO" id="GO:0071770">
    <property type="term" value="P:DIM/DIP cell wall layer assembly"/>
    <property type="evidence" value="ECO:0007669"/>
    <property type="project" value="TreeGrafter"/>
</dbReference>
<dbReference type="GO" id="GO:0006633">
    <property type="term" value="P:fatty acid biosynthetic process"/>
    <property type="evidence" value="ECO:0007669"/>
    <property type="project" value="UniProtKB-UniPathway"/>
</dbReference>
<dbReference type="CDD" id="cd05195">
    <property type="entry name" value="enoyl_red"/>
    <property type="match status" value="1"/>
</dbReference>
<dbReference type="CDD" id="cd08955">
    <property type="entry name" value="KR_2_FAS_SDR_x"/>
    <property type="match status" value="1"/>
</dbReference>
<dbReference type="CDD" id="cd00833">
    <property type="entry name" value="PKS"/>
    <property type="match status" value="1"/>
</dbReference>
<dbReference type="FunFam" id="1.10.1200.10:FF:000014">
    <property type="entry name" value="Multifunctional mycocerosic acid synthase"/>
    <property type="match status" value="1"/>
</dbReference>
<dbReference type="FunFam" id="3.10.129.110:FF:000004">
    <property type="entry name" value="Multifunctional mycocerosic acid synthase"/>
    <property type="match status" value="1"/>
</dbReference>
<dbReference type="FunFam" id="3.40.50.720:FF:000416">
    <property type="entry name" value="Multifunctional mycocerosic acid synthase"/>
    <property type="match status" value="1"/>
</dbReference>
<dbReference type="FunFam" id="3.40.50.720:FF:000372">
    <property type="entry name" value="Mycocerosic acid synthase-like polyketide synthase"/>
    <property type="match status" value="1"/>
</dbReference>
<dbReference type="FunFam" id="3.30.70.250:FF:000003">
    <property type="entry name" value="Polyketide beta-ketoacyl synthase Pks3"/>
    <property type="match status" value="1"/>
</dbReference>
<dbReference type="FunFam" id="3.40.50.720:FF:000209">
    <property type="entry name" value="Polyketide synthase Pks12"/>
    <property type="match status" value="1"/>
</dbReference>
<dbReference type="FunFam" id="3.40.47.10:FF:000019">
    <property type="entry name" value="Polyketide synthase type I"/>
    <property type="match status" value="1"/>
</dbReference>
<dbReference type="Gene3D" id="3.40.47.10">
    <property type="match status" value="1"/>
</dbReference>
<dbReference type="Gene3D" id="1.10.1200.10">
    <property type="entry name" value="ACP-like"/>
    <property type="match status" value="1"/>
</dbReference>
<dbReference type="Gene3D" id="3.30.70.250">
    <property type="entry name" value="Malonyl-CoA ACP transacylase, ACP-binding"/>
    <property type="match status" value="1"/>
</dbReference>
<dbReference type="Gene3D" id="3.40.366.10">
    <property type="entry name" value="Malonyl-Coenzyme A Acyl Carrier Protein, domain 2"/>
    <property type="match status" value="1"/>
</dbReference>
<dbReference type="Gene3D" id="3.90.180.10">
    <property type="entry name" value="Medium-chain alcohol dehydrogenases, catalytic domain"/>
    <property type="match status" value="1"/>
</dbReference>
<dbReference type="Gene3D" id="3.40.50.720">
    <property type="entry name" value="NAD(P)-binding Rossmann-like Domain"/>
    <property type="match status" value="2"/>
</dbReference>
<dbReference type="Gene3D" id="3.10.129.110">
    <property type="entry name" value="Polyketide synthase dehydratase"/>
    <property type="match status" value="1"/>
</dbReference>
<dbReference type="InterPro" id="IPR001227">
    <property type="entry name" value="Ac_transferase_dom_sf"/>
</dbReference>
<dbReference type="InterPro" id="IPR036736">
    <property type="entry name" value="ACP-like_sf"/>
</dbReference>
<dbReference type="InterPro" id="IPR014043">
    <property type="entry name" value="Acyl_transferase_dom"/>
</dbReference>
<dbReference type="InterPro" id="IPR016035">
    <property type="entry name" value="Acyl_Trfase/lysoPLipase"/>
</dbReference>
<dbReference type="InterPro" id="IPR013149">
    <property type="entry name" value="ADH-like_C"/>
</dbReference>
<dbReference type="InterPro" id="IPR013154">
    <property type="entry name" value="ADH-like_N"/>
</dbReference>
<dbReference type="InterPro" id="IPR011032">
    <property type="entry name" value="GroES-like_sf"/>
</dbReference>
<dbReference type="InterPro" id="IPR018201">
    <property type="entry name" value="Ketoacyl_synth_AS"/>
</dbReference>
<dbReference type="InterPro" id="IPR014031">
    <property type="entry name" value="Ketoacyl_synth_C"/>
</dbReference>
<dbReference type="InterPro" id="IPR014030">
    <property type="entry name" value="Ketoacyl_synth_N"/>
</dbReference>
<dbReference type="InterPro" id="IPR016036">
    <property type="entry name" value="Malonyl_transacylase_ACP-bd"/>
</dbReference>
<dbReference type="InterPro" id="IPR053386">
    <property type="entry name" value="MBFA_synthase"/>
</dbReference>
<dbReference type="InterPro" id="IPR036291">
    <property type="entry name" value="NAD(P)-bd_dom_sf"/>
</dbReference>
<dbReference type="InterPro" id="IPR032821">
    <property type="entry name" value="PKS_assoc"/>
</dbReference>
<dbReference type="InterPro" id="IPR020841">
    <property type="entry name" value="PKS_Beta-ketoAc_synthase_dom"/>
</dbReference>
<dbReference type="InterPro" id="IPR042104">
    <property type="entry name" value="PKS_dehydratase_sf"/>
</dbReference>
<dbReference type="InterPro" id="IPR020807">
    <property type="entry name" value="PKS_DH"/>
</dbReference>
<dbReference type="InterPro" id="IPR049551">
    <property type="entry name" value="PKS_DH_C"/>
</dbReference>
<dbReference type="InterPro" id="IPR049552">
    <property type="entry name" value="PKS_DH_N"/>
</dbReference>
<dbReference type="InterPro" id="IPR020843">
    <property type="entry name" value="PKS_ER"/>
</dbReference>
<dbReference type="InterPro" id="IPR013968">
    <property type="entry name" value="PKS_KR"/>
</dbReference>
<dbReference type="InterPro" id="IPR049900">
    <property type="entry name" value="PKS_mFAS_DH"/>
</dbReference>
<dbReference type="InterPro" id="IPR050091">
    <property type="entry name" value="PKS_NRPS_Biosynth_Enz"/>
</dbReference>
<dbReference type="InterPro" id="IPR020806">
    <property type="entry name" value="PKS_PP-bd"/>
</dbReference>
<dbReference type="InterPro" id="IPR009081">
    <property type="entry name" value="PP-bd_ACP"/>
</dbReference>
<dbReference type="InterPro" id="IPR006162">
    <property type="entry name" value="Ppantetheine_attach_site"/>
</dbReference>
<dbReference type="InterPro" id="IPR016039">
    <property type="entry name" value="Thiolase-like"/>
</dbReference>
<dbReference type="NCBIfam" id="NF041183">
    <property type="entry name" value="Pks2_ls1_myc"/>
    <property type="match status" value="1"/>
</dbReference>
<dbReference type="PANTHER" id="PTHR43775">
    <property type="entry name" value="FATTY ACID SYNTHASE"/>
    <property type="match status" value="1"/>
</dbReference>
<dbReference type="PANTHER" id="PTHR43775:SF37">
    <property type="entry name" value="SI:DKEY-61P9.11"/>
    <property type="match status" value="1"/>
</dbReference>
<dbReference type="Pfam" id="PF00698">
    <property type="entry name" value="Acyl_transf_1"/>
    <property type="match status" value="1"/>
</dbReference>
<dbReference type="Pfam" id="PF08240">
    <property type="entry name" value="ADH_N"/>
    <property type="match status" value="1"/>
</dbReference>
<dbReference type="Pfam" id="PF00107">
    <property type="entry name" value="ADH_zinc_N"/>
    <property type="match status" value="1"/>
</dbReference>
<dbReference type="Pfam" id="PF16197">
    <property type="entry name" value="KAsynt_C_assoc"/>
    <property type="match status" value="1"/>
</dbReference>
<dbReference type="Pfam" id="PF00109">
    <property type="entry name" value="ketoacyl-synt"/>
    <property type="match status" value="1"/>
</dbReference>
<dbReference type="Pfam" id="PF02801">
    <property type="entry name" value="Ketoacyl-synt_C"/>
    <property type="match status" value="1"/>
</dbReference>
<dbReference type="Pfam" id="PF08659">
    <property type="entry name" value="KR"/>
    <property type="match status" value="1"/>
</dbReference>
<dbReference type="Pfam" id="PF21089">
    <property type="entry name" value="PKS_DH_N"/>
    <property type="match status" value="1"/>
</dbReference>
<dbReference type="Pfam" id="PF00550">
    <property type="entry name" value="PP-binding"/>
    <property type="match status" value="1"/>
</dbReference>
<dbReference type="Pfam" id="PF14765">
    <property type="entry name" value="PS-DH"/>
    <property type="match status" value="1"/>
</dbReference>
<dbReference type="SMART" id="SM00827">
    <property type="entry name" value="PKS_AT"/>
    <property type="match status" value="1"/>
</dbReference>
<dbReference type="SMART" id="SM00826">
    <property type="entry name" value="PKS_DH"/>
    <property type="match status" value="1"/>
</dbReference>
<dbReference type="SMART" id="SM00829">
    <property type="entry name" value="PKS_ER"/>
    <property type="match status" value="1"/>
</dbReference>
<dbReference type="SMART" id="SM00822">
    <property type="entry name" value="PKS_KR"/>
    <property type="match status" value="1"/>
</dbReference>
<dbReference type="SMART" id="SM00825">
    <property type="entry name" value="PKS_KS"/>
    <property type="match status" value="1"/>
</dbReference>
<dbReference type="SMART" id="SM00823">
    <property type="entry name" value="PKS_PP"/>
    <property type="match status" value="1"/>
</dbReference>
<dbReference type="SUPFAM" id="SSF47336">
    <property type="entry name" value="ACP-like"/>
    <property type="match status" value="1"/>
</dbReference>
<dbReference type="SUPFAM" id="SSF52151">
    <property type="entry name" value="FabD/lysophospholipase-like"/>
    <property type="match status" value="1"/>
</dbReference>
<dbReference type="SUPFAM" id="SSF50129">
    <property type="entry name" value="GroES-like"/>
    <property type="match status" value="1"/>
</dbReference>
<dbReference type="SUPFAM" id="SSF51735">
    <property type="entry name" value="NAD(P)-binding Rossmann-fold domains"/>
    <property type="match status" value="3"/>
</dbReference>
<dbReference type="SUPFAM" id="SSF55048">
    <property type="entry name" value="Probable ACP-binding domain of malonyl-CoA ACP transacylase"/>
    <property type="match status" value="1"/>
</dbReference>
<dbReference type="SUPFAM" id="SSF53901">
    <property type="entry name" value="Thiolase-like"/>
    <property type="match status" value="1"/>
</dbReference>
<dbReference type="PROSITE" id="PS50075">
    <property type="entry name" value="CARRIER"/>
    <property type="match status" value="1"/>
</dbReference>
<dbReference type="PROSITE" id="PS00606">
    <property type="entry name" value="KS3_1"/>
    <property type="match status" value="1"/>
</dbReference>
<dbReference type="PROSITE" id="PS52004">
    <property type="entry name" value="KS3_2"/>
    <property type="match status" value="1"/>
</dbReference>
<dbReference type="PROSITE" id="PS00012">
    <property type="entry name" value="PHOSPHOPANTETHEINE"/>
    <property type="match status" value="1"/>
</dbReference>
<dbReference type="PROSITE" id="PS52019">
    <property type="entry name" value="PKS_MFAS_DH"/>
    <property type="match status" value="1"/>
</dbReference>
<comment type="function">
    <text evidence="3">Involved in sulfolipid-1 biosynthesis. Catalyzes the synthesis of the hepta- and octamethyl phthioceranic and hydroxyphthioceranic acids, the methyl-branched acyl constituents of sulfolipids.</text>
</comment>
<comment type="catalytic activity">
    <reaction evidence="3">
        <text>hexadecanoyl-[(hydroxy)phthioceranic acid synthase] + 7 (S)-methylmalonyl-CoA + 14 NADPH + 21 H(+) = C37-phthioceranyl-[(hydroxy)phthioceranic acid synthase] + 7 CO2 + 14 NADP(+) + 7 CoA + 7 H2O</text>
        <dbReference type="Rhea" id="RHEA:58908"/>
        <dbReference type="Rhea" id="RHEA-COMP:15244"/>
        <dbReference type="Rhea" id="RHEA-COMP:15246"/>
        <dbReference type="ChEBI" id="CHEBI:15377"/>
        <dbReference type="ChEBI" id="CHEBI:15378"/>
        <dbReference type="ChEBI" id="CHEBI:16526"/>
        <dbReference type="ChEBI" id="CHEBI:57287"/>
        <dbReference type="ChEBI" id="CHEBI:57327"/>
        <dbReference type="ChEBI" id="CHEBI:57783"/>
        <dbReference type="ChEBI" id="CHEBI:58349"/>
        <dbReference type="ChEBI" id="CHEBI:78483"/>
        <dbReference type="ChEBI" id="CHEBI:142473"/>
        <dbReference type="EC" id="2.3.1.287"/>
    </reaction>
</comment>
<comment type="catalytic activity">
    <reaction evidence="3">
        <text>hexadecanoyl-[(hydroxy)phthioceranic acid synthase] + 8 (S)-methylmalonyl-CoA + 16 NADPH + 24 H(+) = C40-phthioceranyl-[(hydroxy)phthioceranic acid synthase] + 8 CO2 + 16 NADP(+) + 8 CoA + 8 H2O</text>
        <dbReference type="Rhea" id="RHEA:58904"/>
        <dbReference type="Rhea" id="RHEA-COMP:15244"/>
        <dbReference type="Rhea" id="RHEA-COMP:15245"/>
        <dbReference type="ChEBI" id="CHEBI:15377"/>
        <dbReference type="ChEBI" id="CHEBI:15378"/>
        <dbReference type="ChEBI" id="CHEBI:16526"/>
        <dbReference type="ChEBI" id="CHEBI:57287"/>
        <dbReference type="ChEBI" id="CHEBI:57327"/>
        <dbReference type="ChEBI" id="CHEBI:57783"/>
        <dbReference type="ChEBI" id="CHEBI:58349"/>
        <dbReference type="ChEBI" id="CHEBI:78483"/>
        <dbReference type="ChEBI" id="CHEBI:142472"/>
        <dbReference type="EC" id="2.3.1.287"/>
    </reaction>
</comment>
<comment type="cofactor">
    <cofactor evidence="2">
        <name>pantetheine 4'-phosphate</name>
        <dbReference type="ChEBI" id="CHEBI:47942"/>
    </cofactor>
    <text evidence="2">Binds 1 phosphopantetheine covalently.</text>
</comment>
<comment type="pathway">
    <text evidence="3">Lipid metabolism; fatty acid biosynthesis.</text>
</comment>
<comment type="pathway">
    <text evidence="3">Glycolipid metabolism; sulfolipid-1 biosynthesis.</text>
</comment>
<name>PHAS_MYCBO</name>
<feature type="chain" id="PRO_0000329009" description="Phthioceranic/hydroxyphthioceranic acid synthase">
    <location>
        <begin position="1"/>
        <end position="2126"/>
    </location>
</feature>
<feature type="domain" description="Ketosynthase family 3 (KS3)" evidence="6">
    <location>
        <begin position="24"/>
        <end position="447"/>
    </location>
</feature>
<feature type="domain" description="PKS/mFAS DH" evidence="7">
    <location>
        <begin position="914"/>
        <end position="1198"/>
    </location>
</feature>
<feature type="domain" description="Carrier" evidence="5">
    <location>
        <begin position="2040"/>
        <end position="2126"/>
    </location>
</feature>
<feature type="region of interest" description="Linker domain (LD)" evidence="1">
    <location>
        <begin position="449"/>
        <end position="549"/>
    </location>
</feature>
<feature type="region of interest" description="Acyltransferase (AT)" evidence="1">
    <location>
        <begin position="550"/>
        <end position="849"/>
    </location>
</feature>
<feature type="region of interest" description="Dehydratase (DH)" evidence="1">
    <location>
        <begin position="909"/>
        <end position="1191"/>
    </location>
</feature>
<feature type="region of interest" description="N-terminal hotdog fold" evidence="7">
    <location>
        <begin position="914"/>
        <end position="1032"/>
    </location>
</feature>
<feature type="region of interest" description="C-terminal hotdog fold" evidence="7">
    <location>
        <begin position="1051"/>
        <end position="1198"/>
    </location>
</feature>
<feature type="region of interest" description="Pseudo beta-ketoacyl reductase (PsiKR)" evidence="1">
    <location>
        <begin position="1227"/>
        <end position="1398"/>
    </location>
</feature>
<feature type="region of interest" description="Enoylreductase (ER)" evidence="1">
    <location>
        <begin position="1426"/>
        <end position="1750"/>
    </location>
</feature>
<feature type="region of interest" description="Beta-ketoacyl reductase (KR)" evidence="1">
    <location>
        <begin position="1772"/>
        <end position="2019"/>
    </location>
</feature>
<feature type="active site" description="Acyl-thioester intermediate; for beta-ketoacyl synthase activity" evidence="6">
    <location>
        <position position="196"/>
    </location>
</feature>
<feature type="active site" description="For beta-ketoacyl synthase activity" evidence="6">
    <location>
        <position position="331"/>
    </location>
</feature>
<feature type="active site" description="For beta-ketoacyl synthase activity" evidence="6">
    <location>
        <position position="367"/>
    </location>
</feature>
<feature type="active site" description="Acyl-ester intermediate; for acyltransferase activity" evidence="1">
    <location>
        <position position="641"/>
    </location>
</feature>
<feature type="active site" description="Proton acceptor; for dehydratase activity" evidence="7">
    <location>
        <position position="947"/>
    </location>
</feature>
<feature type="active site" description="Proton donor; for dehydratase activity" evidence="7">
    <location>
        <position position="1115"/>
    </location>
</feature>
<feature type="binding site" evidence="4">
    <location>
        <begin position="1780"/>
        <end position="1783"/>
    </location>
    <ligand>
        <name>NADP(+)</name>
        <dbReference type="ChEBI" id="CHEBI:58349"/>
    </ligand>
</feature>
<feature type="binding site" evidence="4">
    <location>
        <begin position="1803"/>
        <end position="1806"/>
    </location>
    <ligand>
        <name>NADP(+)</name>
        <dbReference type="ChEBI" id="CHEBI:58349"/>
    </ligand>
</feature>
<feature type="binding site" evidence="4">
    <location>
        <begin position="1831"/>
        <end position="1832"/>
    </location>
    <ligand>
        <name>NADP(+)</name>
        <dbReference type="ChEBI" id="CHEBI:58349"/>
    </ligand>
</feature>
<feature type="binding site" evidence="4">
    <location>
        <begin position="1904"/>
        <end position="1905"/>
    </location>
    <ligand>
        <name>NADP(+)</name>
        <dbReference type="ChEBI" id="CHEBI:58349"/>
    </ligand>
</feature>
<feature type="modified residue" description="O-(pantetheine 4'-phosphoryl)serine" evidence="5">
    <location>
        <position position="2075"/>
    </location>
</feature>
<reference key="1">
    <citation type="journal article" date="2003" name="Proc. Natl. Acad. Sci. U.S.A.">
        <title>The complete genome sequence of Mycobacterium bovis.</title>
        <authorList>
            <person name="Garnier T."/>
            <person name="Eiglmeier K."/>
            <person name="Camus J.-C."/>
            <person name="Medina N."/>
            <person name="Mansoor H."/>
            <person name="Pryor M."/>
            <person name="Duthoy S."/>
            <person name="Grondin S."/>
            <person name="Lacroix C."/>
            <person name="Monsempe C."/>
            <person name="Simon S."/>
            <person name="Harris B."/>
            <person name="Atkin R."/>
            <person name="Doggett J."/>
            <person name="Mayes R."/>
            <person name="Keating L."/>
            <person name="Wheeler P.R."/>
            <person name="Parkhill J."/>
            <person name="Barrell B.G."/>
            <person name="Cole S.T."/>
            <person name="Gordon S.V."/>
            <person name="Hewinson R.G."/>
        </authorList>
    </citation>
    <scope>NUCLEOTIDE SEQUENCE [LARGE SCALE GENOMIC DNA]</scope>
    <source>
        <strain>ATCC BAA-935 / AF2122/97</strain>
    </source>
</reference>
<reference key="2">
    <citation type="journal article" date="2017" name="Genome Announc.">
        <title>Updated reference genome sequence and annotation of Mycobacterium bovis AF2122/97.</title>
        <authorList>
            <person name="Malone K.M."/>
            <person name="Farrell D."/>
            <person name="Stuber T.P."/>
            <person name="Schubert O.T."/>
            <person name="Aebersold R."/>
            <person name="Robbe-Austerman S."/>
            <person name="Gordon S.V."/>
        </authorList>
    </citation>
    <scope>NUCLEOTIDE SEQUENCE [LARGE SCALE GENOMIC DNA]</scope>
    <scope>GENOME REANNOTATION</scope>
    <source>
        <strain>ATCC BAA-935 / AF2122/97</strain>
    </source>
</reference>
<gene>
    <name type="primary">pks2</name>
    <name type="ordered locus">BQ2027_MB3855C</name>
</gene>
<protein>
    <recommendedName>
        <fullName evidence="3">Phthioceranic/hydroxyphthioceranic acid synthase</fullName>
        <ecNumber evidence="3">2.3.1.287</ecNumber>
    </recommendedName>
    <alternativeName>
        <fullName evidence="3">Polyketide synthase pks2</fullName>
    </alternativeName>
</protein>
<sequence length="2126" mass="225776">MGLGSAASGTGADRGAWTLAEPRVTPVAVIGMACRLPGGIDSPELLWKALLRGDDLITEVPPDRWDCDEFYDPQPGVPGRTVCKWGGFLDNPADFDCEFFGIGEREAIAIDPQQRLLLETSWEAMEHAGLTQQTLAGSATGVFAGVTHGDYTMVAADAKQLEEPYGYLGNSFSMASGRVAYAMRLHGPAITVDTACSSGLTAVHMACRSLHEGESDVALAGGVALMLEPRKAAAGSALGMLSPTGRCRAFDVAADGFVSGEGCAVVVLKRLPDALADGDRILAVIRGTSANQDGHTVNIATPSQPAQVAAYRAALAAGGVDAATVGMVEAHGPGTPIGDPIEYASVSEVYGVDGPCALASVKTNFGHTQSTAGVLGLIKVVLALKHGVVPRNLHFTRLPDEIAGITTNLFVPEVTTPWPTNGRQVPRRAAVSSYGFSGTNVHAVVEQAPQTEAQPHAASTPPTGTPALFTLSASSADALRQTAQRLTDWIQQHADSLVLSDLAYTLARRRTHRSVRTAVIASSVDELIAGLGEVADGDTVYQPAVGQDDRGPVWLFSGQGSQWAAMGADLLTNESVFAATVAELEPLIAAESGFSVTEAMTAPETVTGIDRVQPTIFAMQVALAATMAAYGVRPGAVIGHSMGESAAAVVAGVLSAEDGVRVICRRSKLMATIAGSAAMASVELPALAVQSELTALGIDDVVVAVVTAPQSTVIAGGTESVRKLVDIWERRDVLARAVAVDVASHSPQVDPILDELIAALADLNPKAPEIPYYSATLFDPREAPACDARYWADNLRHTVRFSAAVRSALDDGYRVFAELSPHPLLTHAVDQIAGSVGMPVAALAGMRREQPLPLGLRRLLTDLHNAGAAVDFSVLCPQGRLVDAPLPAWSHRFLFYDREGVDNRSPGGSTVAVHPLLGAHVRLPEEPERHAWQADVGTATLPWLGDHRIHNVAALPGAAYCEMALSAARAVLGEQSEVRDMRFEAMLLLDDQTPVSTVATVTSPGVVDFAVEALQEGVGHHLRRASAVLQQVSGECEPPAYDMASLLEAHPCRVDGEDLRRQFDKHGVQYGPAFTGLAVAYVAEDATATMLAEVALPGSIRSQQGLYAIHPALLDACFQSVGAHPDSQSVGSGLLVPLGVRRVRAYAPVRTARYCYTRVTKVELVGVEADIDVLDAHGTVLLAVCGLRIGTGVSERDKHNRVLNERLLTIEWHQRELPEMDPSGAGKWLLISDCAASDVTATRLADAFREHSAACTTMRWPLHDDQLAAADQLRDQVGSDEFSGVVVLTGSNTGTPHQGSADRGAEYVRRLVGIARELSDLPGAVPRMYVVTRGAQRVLADDCVNLEQGGLRGLLRTIGAEHPHLRATQIDVDEQTGVEQLARQLLATSEEDETAWRDNEWYVARLCPTPLRPQERRTIVADHQQSGMRLQIRTPGDMQTIELAAFHRVPPGPGQIEVAVRASSVNFADVLIAFGRYPSFEGHLPQLGTDFAGVVTAVGPGVTDHKVGDHVGGMSPNGCWGTFVTCDARLAATLPPGLGDAQAAAVTTAHATAWYGLHELARIRAGDTVLIHSGTGGVGQAAIAIARAAGAEIFATAGTPQRRELLRNMGIEHVYDSRSIEFAEQIRRDTNGRGVDVVLNSVTGAAQLAGLKLLAFRGRFVEIGKRDIYGDTKLGLFPFRRNLSFYAVDLGLLSATHPEELRDLLGTVYRLTAAGELPMPQSTHYPLVEAATAIRVMGNAEHTGKLVLHIPQTGKSLVTLPPEQAQVFRPDGSYIITGGLGGLGLFLAEKMAAAGCGRIVLNSRTQPTQKMRETIEAIAAMGSEVVVECGDIAQPGTAERLVATAVATGLPVRGVLHAAAVVEDATLANITDELLARDWAPKVHGAWELHEATSGQPLDWFCLFSSAAALTGSPGQSAYSAANSWLDAFAHWRQAQGLPATAIAWGAWSDIGQLGWWSASPARASALEESNYTAITPDEGAYAFEALLRHNRVYTGYAPVIGAPWLVAFAERSRFFEVFSSSNGSGTSKFRVELNELPRDEWPARLRQLVAEQVSLILRRTVDPDRPLPEYGLDSLGALELRTRIETETGIRLAPKNVSATVRGLADHLYEQLAPDDAPAAALSSQ</sequence>
<evidence type="ECO:0000250" key="1">
    <source>
        <dbReference type="UniProtKB" id="A0R1E8"/>
    </source>
</evidence>
<evidence type="ECO:0000250" key="2">
    <source>
        <dbReference type="UniProtKB" id="P96202"/>
    </source>
</evidence>
<evidence type="ECO:0000250" key="3">
    <source>
        <dbReference type="UniProtKB" id="P9WQE9"/>
    </source>
</evidence>
<evidence type="ECO:0000250" key="4">
    <source>
        <dbReference type="UniProtKB" id="Q03131"/>
    </source>
</evidence>
<evidence type="ECO:0000255" key="5">
    <source>
        <dbReference type="PROSITE-ProRule" id="PRU00258"/>
    </source>
</evidence>
<evidence type="ECO:0000255" key="6">
    <source>
        <dbReference type="PROSITE-ProRule" id="PRU01348"/>
    </source>
</evidence>
<evidence type="ECO:0000255" key="7">
    <source>
        <dbReference type="PROSITE-ProRule" id="PRU01363"/>
    </source>
</evidence>
<accession>Q7TVK8</accession>
<accession>A0A1R3Y5C6</accession>
<accession>X2BPD2</accession>